<feature type="chain" id="PRO_0000418645" description="Cytochrome b-c1 complex subunit 7-2, mitochondrial">
    <location>
        <begin position="1"/>
        <end position="122"/>
    </location>
</feature>
<feature type="turn" evidence="6">
    <location>
        <begin position="11"/>
        <end position="13"/>
    </location>
</feature>
<feature type="helix" evidence="6">
    <location>
        <begin position="15"/>
        <end position="30"/>
    </location>
</feature>
<feature type="helix" evidence="6">
    <location>
        <begin position="35"/>
        <end position="38"/>
    </location>
</feature>
<feature type="turn" evidence="6">
    <location>
        <begin position="41"/>
        <end position="43"/>
    </location>
</feature>
<feature type="helix" evidence="6">
    <location>
        <begin position="45"/>
        <end position="53"/>
    </location>
</feature>
<feature type="helix" evidence="6">
    <location>
        <begin position="56"/>
        <end position="75"/>
    </location>
</feature>
<feature type="helix" evidence="6">
    <location>
        <begin position="81"/>
        <end position="84"/>
    </location>
</feature>
<feature type="helix" evidence="6">
    <location>
        <begin position="95"/>
        <end position="110"/>
    </location>
</feature>
<proteinExistence type="evidence at protein level"/>
<gene>
    <name type="primary">QCR7-2</name>
    <name type="ordered locus">At5g25450</name>
    <name type="ORF">F18G18.190</name>
    <name type="ORF">T14C9.20</name>
</gene>
<keyword id="KW-0002">3D-structure</keyword>
<keyword id="KW-0025">Alternative splicing</keyword>
<keyword id="KW-0903">Direct protein sequencing</keyword>
<keyword id="KW-0249">Electron transport</keyword>
<keyword id="KW-0472">Membrane</keyword>
<keyword id="KW-0496">Mitochondrion</keyword>
<keyword id="KW-0999">Mitochondrion inner membrane</keyword>
<keyword id="KW-1185">Reference proteome</keyword>
<keyword id="KW-0679">Respiratory chain</keyword>
<keyword id="KW-0813">Transport</keyword>
<accession>F4JWS8</accession>
<sequence length="122" mass="14596">MASFLQRLVDPRKNFLARMHMKSVSNRLRRYGLRYDDLYDPLYDLDIKEALNRLPREIVDARNQRLMRAMDLSMKHEYLPDNLQAVQTPFRSYLQDMLALVKRERAEREALGALPLYQRTIP</sequence>
<protein>
    <recommendedName>
        <fullName>Cytochrome b-c1 complex subunit 7-2, mitochondrial</fullName>
    </recommendedName>
    <alternativeName>
        <fullName>Complex III subunit 7-2</fullName>
    </alternativeName>
    <alternativeName>
        <fullName>Complex III subunit VII</fullName>
    </alternativeName>
    <alternativeName>
        <fullName>Ubiquinol-cytochrome c oxidoreductase subunit 7-2</fullName>
    </alternativeName>
</protein>
<reference key="1">
    <citation type="journal article" date="2000" name="Nature">
        <title>Sequence and analysis of chromosome 5 of the plant Arabidopsis thaliana.</title>
        <authorList>
            <person name="Tabata S."/>
            <person name="Kaneko T."/>
            <person name="Nakamura Y."/>
            <person name="Kotani H."/>
            <person name="Kato T."/>
            <person name="Asamizu E."/>
            <person name="Miyajima N."/>
            <person name="Sasamoto S."/>
            <person name="Kimura T."/>
            <person name="Hosouchi T."/>
            <person name="Kawashima K."/>
            <person name="Kohara M."/>
            <person name="Matsumoto M."/>
            <person name="Matsuno A."/>
            <person name="Muraki A."/>
            <person name="Nakayama S."/>
            <person name="Nakazaki N."/>
            <person name="Naruo K."/>
            <person name="Okumura S."/>
            <person name="Shinpo S."/>
            <person name="Takeuchi C."/>
            <person name="Wada T."/>
            <person name="Watanabe A."/>
            <person name="Yamada M."/>
            <person name="Yasuda M."/>
            <person name="Sato S."/>
            <person name="de la Bastide M."/>
            <person name="Huang E."/>
            <person name="Spiegel L."/>
            <person name="Gnoj L."/>
            <person name="O'Shaughnessy A."/>
            <person name="Preston R."/>
            <person name="Habermann K."/>
            <person name="Murray J."/>
            <person name="Johnson D."/>
            <person name="Rohlfing T."/>
            <person name="Nelson J."/>
            <person name="Stoneking T."/>
            <person name="Pepin K."/>
            <person name="Spieth J."/>
            <person name="Sekhon M."/>
            <person name="Armstrong J."/>
            <person name="Becker M."/>
            <person name="Belter E."/>
            <person name="Cordum H."/>
            <person name="Cordes M."/>
            <person name="Courtney L."/>
            <person name="Courtney W."/>
            <person name="Dante M."/>
            <person name="Du H."/>
            <person name="Edwards J."/>
            <person name="Fryman J."/>
            <person name="Haakensen B."/>
            <person name="Lamar E."/>
            <person name="Latreille P."/>
            <person name="Leonard S."/>
            <person name="Meyer R."/>
            <person name="Mulvaney E."/>
            <person name="Ozersky P."/>
            <person name="Riley A."/>
            <person name="Strowmatt C."/>
            <person name="Wagner-McPherson C."/>
            <person name="Wollam A."/>
            <person name="Yoakum M."/>
            <person name="Bell M."/>
            <person name="Dedhia N."/>
            <person name="Parnell L."/>
            <person name="Shah R."/>
            <person name="Rodriguez M."/>
            <person name="Hoon See L."/>
            <person name="Vil D."/>
            <person name="Baker J."/>
            <person name="Kirchoff K."/>
            <person name="Toth K."/>
            <person name="King L."/>
            <person name="Bahret A."/>
            <person name="Miller B."/>
            <person name="Marra M.A."/>
            <person name="Martienssen R."/>
            <person name="McCombie W.R."/>
            <person name="Wilson R.K."/>
            <person name="Murphy G."/>
            <person name="Bancroft I."/>
            <person name="Volckaert G."/>
            <person name="Wambutt R."/>
            <person name="Duesterhoeft A."/>
            <person name="Stiekema W."/>
            <person name="Pohl T."/>
            <person name="Entian K.-D."/>
            <person name="Terryn N."/>
            <person name="Hartley N."/>
            <person name="Bent E."/>
            <person name="Johnson S."/>
            <person name="Langham S.-A."/>
            <person name="McCullagh B."/>
            <person name="Robben J."/>
            <person name="Grymonprez B."/>
            <person name="Zimmermann W."/>
            <person name="Ramsperger U."/>
            <person name="Wedler H."/>
            <person name="Balke K."/>
            <person name="Wedler E."/>
            <person name="Peters S."/>
            <person name="van Staveren M."/>
            <person name="Dirkse W."/>
            <person name="Mooijman P."/>
            <person name="Klein Lankhorst R."/>
            <person name="Weitzenegger T."/>
            <person name="Bothe G."/>
            <person name="Rose M."/>
            <person name="Hauf J."/>
            <person name="Berneiser S."/>
            <person name="Hempel S."/>
            <person name="Feldpausch M."/>
            <person name="Lamberth S."/>
            <person name="Villarroel R."/>
            <person name="Gielen J."/>
            <person name="Ardiles W."/>
            <person name="Bents O."/>
            <person name="Lemcke K."/>
            <person name="Kolesov G."/>
            <person name="Mayer K.F.X."/>
            <person name="Rudd S."/>
            <person name="Schoof H."/>
            <person name="Schueller C."/>
            <person name="Zaccaria P."/>
            <person name="Mewes H.-W."/>
            <person name="Bevan M."/>
            <person name="Fransz P.F."/>
        </authorList>
    </citation>
    <scope>NUCLEOTIDE SEQUENCE [LARGE SCALE GENOMIC DNA]</scope>
    <source>
        <strain>cv. Columbia</strain>
    </source>
</reference>
<reference key="2">
    <citation type="journal article" date="2017" name="Plant J.">
        <title>Araport11: a complete reannotation of the Arabidopsis thaliana reference genome.</title>
        <authorList>
            <person name="Cheng C.Y."/>
            <person name="Krishnakumar V."/>
            <person name="Chan A.P."/>
            <person name="Thibaud-Nissen F."/>
            <person name="Schobel S."/>
            <person name="Town C.D."/>
        </authorList>
    </citation>
    <scope>GENOME REANNOTATION</scope>
    <source>
        <strain>cv. Columbia</strain>
    </source>
</reference>
<reference key="3">
    <citation type="journal article" date="2008" name="J. Proteome Res.">
        <title>Resolving and identifying protein components of plant mitochondrial respiratory complexes using three dimensions of gel electrophoresis.</title>
        <authorList>
            <person name="Meyer E.H."/>
            <person name="Taylor N.L."/>
            <person name="Millar A.H."/>
        </authorList>
    </citation>
    <scope>PROTEIN SEQUENCE OF 68-104</scope>
    <scope>SUBUNIT</scope>
    <scope>SUBCELLULAR LOCATION</scope>
    <scope>IDENTIFICATION BY MASS SPECTROMETRY</scope>
</reference>
<reference key="4">
    <citation type="journal article" date="2003" name="Plant Physiol.">
        <title>New insights into the respiratory chain of plant mitochondria. Supercomplexes and a unique composition of complex II.</title>
        <authorList>
            <person name="Eubel H."/>
            <person name="Jansch L."/>
            <person name="Braun H.P."/>
        </authorList>
    </citation>
    <scope>SUBUNIT</scope>
</reference>
<reference key="5">
    <citation type="journal article" date="2008" name="Plant Physiol.">
        <title>Arabidopsis PPR40 connects abiotic stress responses to mitochondrial electron transport.</title>
        <authorList>
            <person name="Zsigmond L."/>
            <person name="Rigo G."/>
            <person name="Szarka A."/>
            <person name="Szekely G."/>
            <person name="Oetvoes K."/>
            <person name="Darula Z."/>
            <person name="Medzihradszky K.F."/>
            <person name="Koncz C."/>
            <person name="Koncz Z."/>
            <person name="Szabados L."/>
        </authorList>
    </citation>
    <scope>SUBUNIT</scope>
    <scope>IDENTIFICATION BY MASS SPECTROMETRY</scope>
    <scope>NOMENCLATURE</scope>
    <source>
        <strain>cv. Columbia</strain>
    </source>
</reference>
<comment type="function">
    <text evidence="1">Component of the ubiquinol-cytochrome c oxidoreductase, a multisubunit transmembrane complex that is part of the mitochondrial electron transport chain which drives oxidative phosphorylation. The respiratory chain contains 3 multisubunit complexes succinate dehydrogenase (complex II, CII), ubiquinol-cytochrome c oxidoreductase (cytochrome b-c1 complex, complex III, CIII) and cytochrome c oxidase (complex IV, CIV), that cooperate to transfer electrons derived from NADH and succinate to molecular oxygen, creating an electrochemical gradient over the inner membrane that drives transmembrane transport and the ATP synthase. The cytochrome b-c1 complex catalyzes electron transfer from ubiquinol to cytochrome c, linking this redox reaction to translocation of protons across the mitochondrial inner membrane, with protons being carried across the membrane as hydrogens on the quinol. In the process called Q cycle, 2 protons are consumed from the matrix, 4 protons are released into the intermembrane space and 2 electrons are passed to cytochrome c.</text>
</comment>
<comment type="subunit">
    <text evidence="2 3 4">Component of the ubiquinol-cytochrome c oxidoreductase (cytochrome b-c1 complex, complex III, CIII), a multisubunit enzyme composed of 10 subunits. The complex is composed of 3 respiratory subunits cytochrome b (MT-CYB), cytochrome c1 (CYC1-1 or CYC1-2) and Rieske protein (UCR1-1 or UCR1-2), 2 core protein subunits MPPalpha1 (or MPPalpha2) and MPPB, and 5 low-molecular weight protein subunits QCR7-1 (or QCR7-2), UCRQ-1 (or UCRQ-2), QCR9, UCRY and probably QCR6-1 (or QCR6-2) (PubMed:18189341, PubMed:18305213). The complex exists as an obligatory dimer and forms supercomplexes (SCs) in the inner mitochondrial membrane with NADH-ubiquinone oxidoreductase (complex I, CI), resulting in different assemblies (supercomplexes SCI(1)III(2) and SCI(2)III(4)) (PubMed:12970493).</text>
</comment>
<comment type="subcellular location">
    <subcellularLocation>
        <location evidence="3">Mitochondrion inner membrane</location>
        <topology evidence="1">Peripheral membrane protein</topology>
        <orientation evidence="1">Matrix side</orientation>
    </subcellularLocation>
</comment>
<comment type="alternative products">
    <event type="alternative splicing"/>
    <isoform>
        <id>F4JWS8-1</id>
        <name>1</name>
        <sequence type="displayed"/>
    </isoform>
    <text>A number of isoforms are produced. According to EST sequences.</text>
</comment>
<comment type="similarity">
    <text evidence="5">Belongs to the UQCRB/QCR7 family.</text>
</comment>
<dbReference type="EMBL" id="AC006258">
    <property type="status" value="NOT_ANNOTATED_CDS"/>
    <property type="molecule type" value="Genomic_DNA"/>
</dbReference>
<dbReference type="EMBL" id="AC006601">
    <property type="status" value="NOT_ANNOTATED_CDS"/>
    <property type="molecule type" value="Genomic_DNA"/>
</dbReference>
<dbReference type="EMBL" id="CP002688">
    <property type="protein sequence ID" value="AED93444.1"/>
    <property type="molecule type" value="Genomic_DNA"/>
</dbReference>
<dbReference type="RefSeq" id="NP_197927.1">
    <molecule id="F4JWS8-1"/>
    <property type="nucleotide sequence ID" value="NM_122455.4"/>
</dbReference>
<dbReference type="PDB" id="8BEP">
    <property type="method" value="EM"/>
    <property type="resolution" value="2.29 A"/>
    <property type="chains" value="F/P=1-122"/>
</dbReference>
<dbReference type="PDB" id="8BPX">
    <property type="method" value="EM"/>
    <property type="resolution" value="2.09 A"/>
    <property type="chains" value="AF/BF=1-122"/>
</dbReference>
<dbReference type="PDB" id="8BQ5">
    <property type="method" value="EM"/>
    <property type="resolution" value="2.73 A"/>
    <property type="chains" value="AF/BF=1-122"/>
</dbReference>
<dbReference type="PDB" id="8BQ6">
    <property type="method" value="EM"/>
    <property type="resolution" value="2.80 A"/>
    <property type="chains" value="AF/BF=1-122"/>
</dbReference>
<dbReference type="PDBsum" id="8BEP"/>
<dbReference type="PDBsum" id="8BPX"/>
<dbReference type="PDBsum" id="8BQ5"/>
<dbReference type="PDBsum" id="8BQ6"/>
<dbReference type="EMDB" id="EMD-16008"/>
<dbReference type="EMDB" id="EMD-16168"/>
<dbReference type="EMDB" id="EMD-16171"/>
<dbReference type="EMDB" id="EMD-16172"/>
<dbReference type="SMR" id="F4JWS8"/>
<dbReference type="BioGRID" id="17894">
    <property type="interactions" value="19"/>
</dbReference>
<dbReference type="FunCoup" id="F4JWS8">
    <property type="interactions" value="640"/>
</dbReference>
<dbReference type="IntAct" id="F4JWS8">
    <property type="interactions" value="1"/>
</dbReference>
<dbReference type="STRING" id="3702.F4JWS8"/>
<dbReference type="PaxDb" id="3702-AT5G25450.1"/>
<dbReference type="ProteomicsDB" id="226028">
    <molecule id="F4JWS8-1"/>
</dbReference>
<dbReference type="EnsemblPlants" id="AT5G25450.1">
    <molecule id="F4JWS8-1"/>
    <property type="protein sequence ID" value="AT5G25450.1"/>
    <property type="gene ID" value="AT5G25450"/>
</dbReference>
<dbReference type="GeneID" id="832619"/>
<dbReference type="Gramene" id="AT5G25450.1">
    <molecule id="F4JWS8-1"/>
    <property type="protein sequence ID" value="AT5G25450.1"/>
    <property type="gene ID" value="AT5G25450"/>
</dbReference>
<dbReference type="KEGG" id="ath:AT5G25450"/>
<dbReference type="Araport" id="AT5G25450"/>
<dbReference type="TAIR" id="AT5G25450"/>
<dbReference type="eggNOG" id="KOG3440">
    <property type="taxonomic scope" value="Eukaryota"/>
</dbReference>
<dbReference type="HOGENOM" id="CLU_115154_3_0_1"/>
<dbReference type="InParanoid" id="F4JWS8"/>
<dbReference type="OMA" id="KSWFAAQ"/>
<dbReference type="OrthoDB" id="425749at2759"/>
<dbReference type="PhylomeDB" id="F4JWS8"/>
<dbReference type="BioCyc" id="MetaCyc:MONOMERQT-2769"/>
<dbReference type="CD-CODE" id="4299E36E">
    <property type="entry name" value="Nucleolus"/>
</dbReference>
<dbReference type="PRO" id="PR:F4JWS8"/>
<dbReference type="Proteomes" id="UP000006548">
    <property type="component" value="Chromosome 5"/>
</dbReference>
<dbReference type="ExpressionAtlas" id="F4JWS8">
    <property type="expression patterns" value="baseline and differential"/>
</dbReference>
<dbReference type="GO" id="GO:0005743">
    <property type="term" value="C:mitochondrial inner membrane"/>
    <property type="evidence" value="ECO:0007669"/>
    <property type="project" value="UniProtKB-SubCell"/>
</dbReference>
<dbReference type="GO" id="GO:0005739">
    <property type="term" value="C:mitochondrion"/>
    <property type="evidence" value="ECO:0007005"/>
    <property type="project" value="TAIR"/>
</dbReference>
<dbReference type="GO" id="GO:0009536">
    <property type="term" value="C:plastid"/>
    <property type="evidence" value="ECO:0007005"/>
    <property type="project" value="TAIR"/>
</dbReference>
<dbReference type="GO" id="GO:0045275">
    <property type="term" value="C:respiratory chain complex III"/>
    <property type="evidence" value="ECO:0007669"/>
    <property type="project" value="InterPro"/>
</dbReference>
<dbReference type="GO" id="GO:0006122">
    <property type="term" value="P:mitochondrial electron transport, ubiquinol to cytochrome c"/>
    <property type="evidence" value="ECO:0007669"/>
    <property type="project" value="InterPro"/>
</dbReference>
<dbReference type="FunFam" id="1.10.1090.10:FF:000002">
    <property type="entry name" value="Cytochrome b-c1 complex subunit 7"/>
    <property type="match status" value="1"/>
</dbReference>
<dbReference type="Gene3D" id="1.10.1090.10">
    <property type="entry name" value="Cytochrome b-c1 complex subunit 7"/>
    <property type="match status" value="1"/>
</dbReference>
<dbReference type="InterPro" id="IPR003197">
    <property type="entry name" value="QCR7"/>
</dbReference>
<dbReference type="InterPro" id="IPR036544">
    <property type="entry name" value="QCR7_sf"/>
</dbReference>
<dbReference type="PANTHER" id="PTHR12022:SF0">
    <property type="entry name" value="CYTOCHROME B-C1 COMPLEX SUBUNIT 7"/>
    <property type="match status" value="1"/>
</dbReference>
<dbReference type="PANTHER" id="PTHR12022">
    <property type="entry name" value="UBIQUINOL-CYTOCHROME C REDUCTASE COMPLEX 14 KD PROTEIN"/>
    <property type="match status" value="1"/>
</dbReference>
<dbReference type="Pfam" id="PF02271">
    <property type="entry name" value="UCR_14kD"/>
    <property type="match status" value="1"/>
</dbReference>
<dbReference type="PIRSF" id="PIRSF000022">
    <property type="entry name" value="Bc1_14K"/>
    <property type="match status" value="1"/>
</dbReference>
<dbReference type="SUPFAM" id="SSF81524">
    <property type="entry name" value="14 kDa protein of cytochrome bc1 complex (Ubiquinol-cytochrome c reductase)"/>
    <property type="match status" value="1"/>
</dbReference>
<name>QCR72_ARATH</name>
<evidence type="ECO:0000250" key="1">
    <source>
        <dbReference type="UniProtKB" id="P00128"/>
    </source>
</evidence>
<evidence type="ECO:0000269" key="2">
    <source>
    </source>
</evidence>
<evidence type="ECO:0000269" key="3">
    <source>
    </source>
</evidence>
<evidence type="ECO:0000269" key="4">
    <source>
    </source>
</evidence>
<evidence type="ECO:0000305" key="5"/>
<evidence type="ECO:0007829" key="6">
    <source>
        <dbReference type="PDB" id="8BEP"/>
    </source>
</evidence>
<organism>
    <name type="scientific">Arabidopsis thaliana</name>
    <name type="common">Mouse-ear cress</name>
    <dbReference type="NCBI Taxonomy" id="3702"/>
    <lineage>
        <taxon>Eukaryota</taxon>
        <taxon>Viridiplantae</taxon>
        <taxon>Streptophyta</taxon>
        <taxon>Embryophyta</taxon>
        <taxon>Tracheophyta</taxon>
        <taxon>Spermatophyta</taxon>
        <taxon>Magnoliopsida</taxon>
        <taxon>eudicotyledons</taxon>
        <taxon>Gunneridae</taxon>
        <taxon>Pentapetalae</taxon>
        <taxon>rosids</taxon>
        <taxon>malvids</taxon>
        <taxon>Brassicales</taxon>
        <taxon>Brassicaceae</taxon>
        <taxon>Camelineae</taxon>
        <taxon>Arabidopsis</taxon>
    </lineage>
</organism>